<feature type="chain" id="PRO_0000435664" description="2-hydroxyisocaproyl-CoA dehydratase activator">
    <location>
        <begin position="1"/>
        <end position="266"/>
    </location>
</feature>
<feature type="binding site" evidence="2">
    <location>
        <begin position="10"/>
        <end position="14"/>
    </location>
    <ligand>
        <name>ATP</name>
        <dbReference type="ChEBI" id="CHEBI:30616"/>
    </ligand>
</feature>
<feature type="binding site" evidence="2">
    <location>
        <begin position="102"/>
        <end position="104"/>
    </location>
    <ligand>
        <name>ATP</name>
        <dbReference type="ChEBI" id="CHEBI:30616"/>
    </ligand>
</feature>
<feature type="binding site" evidence="2">
    <location>
        <position position="125"/>
    </location>
    <ligand>
        <name>[4Fe-4S] cluster</name>
        <dbReference type="ChEBI" id="CHEBI:49883"/>
    </ligand>
</feature>
<feature type="binding site" evidence="2">
    <location>
        <position position="134"/>
    </location>
    <ligand>
        <name>ATP</name>
        <dbReference type="ChEBI" id="CHEBI:30616"/>
    </ligand>
</feature>
<feature type="binding site" evidence="2">
    <location>
        <position position="164"/>
    </location>
    <ligand>
        <name>[4Fe-4S] cluster</name>
        <dbReference type="ChEBI" id="CHEBI:49883"/>
    </ligand>
</feature>
<feature type="binding site" evidence="2">
    <location>
        <position position="215"/>
    </location>
    <ligand>
        <name>ATP</name>
        <dbReference type="ChEBI" id="CHEBI:30616"/>
    </ligand>
</feature>
<feature type="binding site" evidence="2">
    <location>
        <position position="241"/>
    </location>
    <ligand>
        <name>ATP</name>
        <dbReference type="ChEBI" id="CHEBI:30616"/>
    </ligand>
</feature>
<feature type="strand" evidence="6">
    <location>
        <begin position="2"/>
        <end position="8"/>
    </location>
</feature>
<feature type="strand" evidence="6">
    <location>
        <begin position="13"/>
        <end position="19"/>
    </location>
</feature>
<feature type="turn" evidence="6">
    <location>
        <begin position="20"/>
        <end position="22"/>
    </location>
</feature>
<feature type="strand" evidence="6">
    <location>
        <begin position="23"/>
        <end position="31"/>
    </location>
</feature>
<feature type="turn" evidence="5">
    <location>
        <begin position="34"/>
        <end position="37"/>
    </location>
</feature>
<feature type="helix" evidence="6">
    <location>
        <begin position="38"/>
        <end position="50"/>
    </location>
</feature>
<feature type="helix" evidence="6">
    <location>
        <begin position="54"/>
        <end position="56"/>
    </location>
</feature>
<feature type="strand" evidence="6">
    <location>
        <begin position="57"/>
        <end position="64"/>
    </location>
</feature>
<feature type="helix" evidence="6">
    <location>
        <begin position="67"/>
        <end position="69"/>
    </location>
</feature>
<feature type="strand" evidence="6">
    <location>
        <begin position="74"/>
        <end position="76"/>
    </location>
</feature>
<feature type="helix" evidence="6">
    <location>
        <begin position="79"/>
        <end position="90"/>
    </location>
</feature>
<feature type="strand" evidence="6">
    <location>
        <begin position="96"/>
        <end position="100"/>
    </location>
</feature>
<feature type="strand" evidence="6">
    <location>
        <begin position="105"/>
        <end position="110"/>
    </location>
</feature>
<feature type="strand" evidence="6">
    <location>
        <begin position="116"/>
        <end position="122"/>
    </location>
</feature>
<feature type="helix" evidence="6">
    <location>
        <begin position="130"/>
        <end position="140"/>
    </location>
</feature>
<feature type="helix" evidence="6">
    <location>
        <begin position="144"/>
        <end position="146"/>
    </location>
</feature>
<feature type="helix" evidence="6">
    <location>
        <begin position="147"/>
        <end position="151"/>
    </location>
</feature>
<feature type="helix" evidence="6">
    <location>
        <begin position="165"/>
        <end position="177"/>
    </location>
</feature>
<feature type="helix" evidence="6">
    <location>
        <begin position="182"/>
        <end position="204"/>
    </location>
</feature>
<feature type="strand" evidence="6">
    <location>
        <begin position="208"/>
        <end position="214"/>
    </location>
</feature>
<feature type="helix" evidence="6">
    <location>
        <begin position="215"/>
        <end position="218"/>
    </location>
</feature>
<feature type="helix" evidence="6">
    <location>
        <begin position="220"/>
        <end position="230"/>
    </location>
</feature>
<feature type="helix" evidence="6">
    <location>
        <begin position="240"/>
        <end position="242"/>
    </location>
</feature>
<feature type="helix" evidence="6">
    <location>
        <begin position="243"/>
        <end position="261"/>
    </location>
</feature>
<accession>Q5U925</accession>
<comment type="function">
    <text evidence="1 2">Involved in the reductive branch of L-leucine fermentation. Required for the activation of (R)-2-hydroxyisocaproyl-CoA dehydratase. The reduced activator transfers one electron to the dehydratase concomitant with hydrolysis of ATP. This protein is extremely sensitive towards oxygen.</text>
</comment>
<comment type="cofactor">
    <cofactor evidence="1 2">
        <name>[4Fe-4S] cluster</name>
        <dbReference type="ChEBI" id="CHEBI:49883"/>
    </cofactor>
    <text evidence="1 2">Binds 1 [4Fe-4S] cluster per dimer.</text>
</comment>
<comment type="subunit">
    <text evidence="2">Homodimer.</text>
</comment>
<comment type="miscellaneous">
    <text evidence="2">Only in the reduced state, HadI exhibits significant ATPase activity, which appears to be essential for unidirectional electron transfer.</text>
</comment>
<comment type="similarity">
    <text evidence="4">Belongs to the HadI activator family.</text>
</comment>
<keyword id="KW-0002">3D-structure</keyword>
<keyword id="KW-0004">4Fe-4S</keyword>
<keyword id="KW-0067">ATP-binding</keyword>
<keyword id="KW-0378">Hydrolase</keyword>
<keyword id="KW-0408">Iron</keyword>
<keyword id="KW-0411">Iron-sulfur</keyword>
<keyword id="KW-0479">Metal-binding</keyword>
<keyword id="KW-0547">Nucleotide-binding</keyword>
<keyword id="KW-0614">Plasmid</keyword>
<name>HADI_CLODI</name>
<sequence length="266" mass="28423">MYTMGLDIGSTASKGVILKNGEDIVASETISSGTGTTGPSRVLEKLYGKTGLAREDIKKVVVTGYGRMNYSDADKQISELSCHARGVNFIIPETRTIIDIGGQDAKVLKLDNNGRLLNFLMNDKCAAGTGRFLDVMAKIIEVDVSELGSISMNSQNEVSISSTCTVFAESEVISHLSENAKIEDIVAGIHTSVAKRVSSLVKRIGVQRNVVMVGGVARNSGIVRAMAREINTEIIVPDIPQLTGALGAALYAFDEAKESQKEVKNI</sequence>
<evidence type="ECO:0000269" key="1">
    <source>
    </source>
</evidence>
<evidence type="ECO:0000269" key="2">
    <source>
    </source>
</evidence>
<evidence type="ECO:0000303" key="3">
    <source>
    </source>
</evidence>
<evidence type="ECO:0000305" key="4"/>
<evidence type="ECO:0007829" key="5">
    <source>
        <dbReference type="PDB" id="4EHT"/>
    </source>
</evidence>
<evidence type="ECO:0007829" key="6">
    <source>
        <dbReference type="PDB" id="4EHU"/>
    </source>
</evidence>
<proteinExistence type="evidence at protein level"/>
<protein>
    <recommendedName>
        <fullName evidence="3">2-hydroxyisocaproyl-CoA dehydratase activator</fullName>
        <ecNumber evidence="4">3.-.-.-</ecNumber>
    </recommendedName>
</protein>
<geneLocation type="plasmid">
    <name>2</name>
</geneLocation>
<dbReference type="EC" id="3.-.-.-" evidence="4"/>
<dbReference type="EMBL" id="AY772815">
    <property type="protein sequence ID" value="AAV40818.1"/>
    <property type="molecule type" value="Genomic_DNA"/>
</dbReference>
<dbReference type="EMBL" id="LK932467">
    <property type="protein sequence ID" value="CDS83472.1"/>
    <property type="molecule type" value="Genomic_DNA"/>
</dbReference>
<dbReference type="EMBL" id="LK932350">
    <property type="protein sequence ID" value="CDS83578.1"/>
    <property type="molecule type" value="Genomic_DNA"/>
</dbReference>
<dbReference type="EMBL" id="LK933216">
    <property type="protein sequence ID" value="CDT50868.1"/>
    <property type="molecule type" value="Genomic_DNA"/>
</dbReference>
<dbReference type="EMBL" id="LN614756">
    <property type="protein sequence ID" value="CEJ96914.1"/>
    <property type="molecule type" value="Genomic_DNA"/>
</dbReference>
<dbReference type="EMBL" id="LN831031">
    <property type="protein sequence ID" value="CKH72430.1"/>
    <property type="molecule type" value="Genomic_DNA"/>
</dbReference>
<dbReference type="EMBL" id="CP013196">
    <property type="protein sequence ID" value="ALP02349.1"/>
    <property type="molecule type" value="Genomic_DNA"/>
</dbReference>
<dbReference type="RefSeq" id="WP_009888223.1">
    <property type="nucleotide sequence ID" value="NZ_WUUI01000021.1"/>
</dbReference>
<dbReference type="PDB" id="4EHT">
    <property type="method" value="X-ray"/>
    <property type="resolution" value="1.95 A"/>
    <property type="chains" value="A/B=1-266"/>
</dbReference>
<dbReference type="PDB" id="4EHU">
    <property type="method" value="X-ray"/>
    <property type="resolution" value="1.60 A"/>
    <property type="chains" value="A/B=1-266"/>
</dbReference>
<dbReference type="PDB" id="4EIA">
    <property type="method" value="X-ray"/>
    <property type="resolution" value="3.00 A"/>
    <property type="chains" value="A=1-266"/>
</dbReference>
<dbReference type="PDBsum" id="4EHT"/>
<dbReference type="PDBsum" id="4EHU"/>
<dbReference type="PDBsum" id="4EIA"/>
<dbReference type="SMR" id="Q5U925"/>
<dbReference type="GeneID" id="66352921"/>
<dbReference type="KEGG" id="pdf:CD630DERM_03960"/>
<dbReference type="BioCyc" id="MetaCyc:MONOMER-20613"/>
<dbReference type="BRENDA" id="4.2.1.157">
    <property type="organism ID" value="1473"/>
</dbReference>
<dbReference type="BRENDA" id="5.6.1.9">
    <property type="organism ID" value="1473"/>
</dbReference>
<dbReference type="SABIO-RK" id="Q5U925"/>
<dbReference type="EvolutionaryTrace" id="Q5U925"/>
<dbReference type="GO" id="GO:0051539">
    <property type="term" value="F:4 iron, 4 sulfur cluster binding"/>
    <property type="evidence" value="ECO:0000314"/>
    <property type="project" value="UniProtKB"/>
</dbReference>
<dbReference type="GO" id="GO:0005524">
    <property type="term" value="F:ATP binding"/>
    <property type="evidence" value="ECO:0007669"/>
    <property type="project" value="UniProtKB-KW"/>
</dbReference>
<dbReference type="GO" id="GO:0016787">
    <property type="term" value="F:hydrolase activity"/>
    <property type="evidence" value="ECO:0000314"/>
    <property type="project" value="UniProtKB"/>
</dbReference>
<dbReference type="GO" id="GO:0046872">
    <property type="term" value="F:metal ion binding"/>
    <property type="evidence" value="ECO:0007669"/>
    <property type="project" value="UniProtKB-KW"/>
</dbReference>
<dbReference type="GO" id="GO:0006551">
    <property type="term" value="P:L-leucine metabolic process"/>
    <property type="evidence" value="ECO:0000314"/>
    <property type="project" value="UniProtKB"/>
</dbReference>
<dbReference type="CDD" id="cd24103">
    <property type="entry name" value="ASKHA_NBD_HgdC_HadI-like"/>
    <property type="match status" value="1"/>
</dbReference>
<dbReference type="FunFam" id="3.30.420.40:FF:000217">
    <property type="entry name" value="2-hydroxyisocaproyl-CoA dehydratase activator"/>
    <property type="match status" value="1"/>
</dbReference>
<dbReference type="Gene3D" id="3.30.420.40">
    <property type="match status" value="2"/>
</dbReference>
<dbReference type="InterPro" id="IPR002731">
    <property type="entry name" value="ATPase_BadF"/>
</dbReference>
<dbReference type="InterPro" id="IPR043129">
    <property type="entry name" value="ATPase_NBD"/>
</dbReference>
<dbReference type="InterPro" id="IPR008275">
    <property type="entry name" value="CoA_E_activase_dom"/>
</dbReference>
<dbReference type="InterPro" id="IPR051805">
    <property type="entry name" value="Dehydratase_Activator_Redct"/>
</dbReference>
<dbReference type="NCBIfam" id="TIGR00241">
    <property type="entry name" value="CoA_E_activ"/>
    <property type="match status" value="1"/>
</dbReference>
<dbReference type="PANTHER" id="PTHR32329:SF2">
    <property type="entry name" value="BIFUNCTIONAL PROTEIN [INCLUDES 2-HYDROXYACYL-COA DEHYDRATASE (N-TER) AND ITS ACTIVATOR DOMAIN (C_TERM)"/>
    <property type="match status" value="1"/>
</dbReference>
<dbReference type="PANTHER" id="PTHR32329">
    <property type="entry name" value="BIFUNCTIONAL PROTEIN [INCLUDES 2-HYDROXYACYL-COA DEHYDRATASE (N-TER) AND ITS ACTIVATOR DOMAIN (C_TERM)-RELATED"/>
    <property type="match status" value="1"/>
</dbReference>
<dbReference type="Pfam" id="PF01869">
    <property type="entry name" value="BcrAD_BadFG"/>
    <property type="match status" value="1"/>
</dbReference>
<dbReference type="SUPFAM" id="SSF53067">
    <property type="entry name" value="Actin-like ATPase domain"/>
    <property type="match status" value="1"/>
</dbReference>
<gene>
    <name evidence="3" type="primary">hadI</name>
    <name type="synonym">fldI_1</name>
    <name type="synonym">lcdC</name>
    <name type="ORF">BN1095_530010</name>
    <name type="ORF">BN1096_180047</name>
    <name type="ORF">BN1097_160049</name>
    <name type="ORF">CD630DERM_03960</name>
    <name type="ORF">ERS445050_03311</name>
    <name type="ORF">PCZ31_0395</name>
</gene>
<reference key="1">
    <citation type="journal article" date="2005" name="FEBS J.">
        <title>2-hydroxyisocaproyl-CoA dehydratase and its activator from Clostridium difficile.</title>
        <authorList>
            <person name="Kim J."/>
            <person name="Darley D."/>
            <person name="Buckel W."/>
        </authorList>
    </citation>
    <scope>NUCLEOTIDE SEQUENCE [GENOMIC DNA]</scope>
    <scope>FUNCTION</scope>
    <scope>COFACTOR</scope>
    <source>
        <strain>ATCC 9689 / DSM 1296 / BCRC 10642 / JCM 1296 / NCIMB 10666 / NCTC 11209 / 90556-M6S</strain>
    </source>
</reference>
<reference key="2">
    <citation type="submission" date="2014-07" db="EMBL/GenBank/DDBJ databases">
        <authorList>
            <person name="Monot M."/>
        </authorList>
    </citation>
    <scope>NUCLEOTIDE SEQUENCE [LARGE SCALE GENOMIC DNA]</scope>
</reference>
<reference key="3">
    <citation type="submission" date="2014-09" db="EMBL/GenBank/DDBJ databases">
        <authorList>
            <person name="Magalhaes I.L.F."/>
            <person name="Oliveira U."/>
            <person name="Santos F.R."/>
            <person name="Vidigal T.H.D.A."/>
            <person name="Brescovit A.D."/>
            <person name="Santos A.J."/>
        </authorList>
    </citation>
    <scope>NUCLEOTIDE SEQUENCE [LARGE SCALE GENOMIC DNA]</scope>
    <source>
        <strain>630Derm</strain>
    </source>
</reference>
<reference key="4">
    <citation type="submission" date="2015-03" db="EMBL/GenBank/DDBJ databases">
        <authorList>
            <consortium name="Pathogen Informatics"/>
        </authorList>
    </citation>
    <scope>NUCLEOTIDE SEQUENCE [LARGE SCALE GENOMIC DNA]</scope>
    <source>
        <strain>NCTC 13307</strain>
    </source>
</reference>
<reference key="5">
    <citation type="submission" date="2015-11" db="EMBL/GenBank/DDBJ databases">
        <authorList>
            <person name="Pereira F.L."/>
            <person name="Oliveira Junior C.A."/>
            <person name="Silva R.O.S."/>
            <person name="Dorela F.A."/>
            <person name="Carvalho A.F."/>
            <person name="Almeida G.M.F."/>
            <person name="Leal C.A.G."/>
            <person name="Lobato F.C.F."/>
            <person name="Figueiredo H.C.P."/>
        </authorList>
    </citation>
    <scope>NUCLEOTIDE SEQUENCE [LARGE SCALE GENOMIC DNA]</scope>
    <source>
        <strain>Z31</strain>
    </source>
</reference>
<reference key="6">
    <citation type="journal article" date="2012" name="Biochemistry">
        <title>On the ATP-dependent activation of the radical enzyme (R)-2-hydroxyisocaproyl-CoA dehydratase.</title>
        <authorList>
            <person name="Knauer S.H."/>
            <person name="Buckel W."/>
            <person name="Dobbek H."/>
        </authorList>
    </citation>
    <scope>X-RAY CRYSTALLOGRAPHY (1.60 ANGSTROMS) IN COMPLEX WITH ATP; ATP ANALOG AND IRON-SULFUR (4FE-4S)</scope>
    <scope>FUNCTION</scope>
    <scope>COFACTOR</scope>
    <scope>SUBUNIT</scope>
    <scope>REACTION MECHANISM</scope>
    <source>
        <plasmid>2</plasmid>
    </source>
</reference>
<organism>
    <name type="scientific">Clostridioides difficile</name>
    <name type="common">Peptoclostridium difficile</name>
    <dbReference type="NCBI Taxonomy" id="1496"/>
    <lineage>
        <taxon>Bacteria</taxon>
        <taxon>Bacillati</taxon>
        <taxon>Bacillota</taxon>
        <taxon>Clostridia</taxon>
        <taxon>Peptostreptococcales</taxon>
        <taxon>Peptostreptococcaceae</taxon>
        <taxon>Clostridioides</taxon>
    </lineage>
</organism>